<gene>
    <name type="primary">nagA</name>
    <name type="ordered locus">HI_0140</name>
</gene>
<proteinExistence type="inferred from homology"/>
<keyword id="KW-0119">Carbohydrate metabolism</keyword>
<keyword id="KW-0378">Hydrolase</keyword>
<keyword id="KW-0479">Metal-binding</keyword>
<keyword id="KW-1185">Reference proteome</keyword>
<comment type="function">
    <text evidence="1">Involved in the first committed step in the biosynthesis of amino-sugar-nucleotides. Catalyzes the hydrolysis of the N-acetyl group of N-acetylglucosamine-6-phosphate (GlcNAc-6-P) to yield glucosamine 6-phosphate and acetate.</text>
</comment>
<comment type="catalytic activity">
    <reaction evidence="1">
        <text>N-acetyl-D-glucosamine 6-phosphate + H2O = D-glucosamine 6-phosphate + acetate</text>
        <dbReference type="Rhea" id="RHEA:22936"/>
        <dbReference type="ChEBI" id="CHEBI:15377"/>
        <dbReference type="ChEBI" id="CHEBI:30089"/>
        <dbReference type="ChEBI" id="CHEBI:57513"/>
        <dbReference type="ChEBI" id="CHEBI:58725"/>
        <dbReference type="EC" id="3.5.1.25"/>
    </reaction>
</comment>
<comment type="cofactor">
    <cofactor evidence="1">
        <name>a divalent metal cation</name>
        <dbReference type="ChEBI" id="CHEBI:60240"/>
    </cofactor>
    <text evidence="1">Binds 1 divalent metal cation per subunit.</text>
</comment>
<comment type="pathway">
    <text evidence="1">Amino-sugar metabolism; N-acetylneuraminate degradation; D-fructose 6-phosphate from N-acetylneuraminate: step 4/5.</text>
</comment>
<comment type="subunit">
    <text evidence="1">Homotetramer.</text>
</comment>
<comment type="similarity">
    <text evidence="2">Belongs to the metallo-dependent hydrolases superfamily. NagA family.</text>
</comment>
<evidence type="ECO:0000250" key="1">
    <source>
        <dbReference type="UniProtKB" id="P0AF18"/>
    </source>
</evidence>
<evidence type="ECO:0000305" key="2"/>
<name>NAGA_HAEIN</name>
<reference key="1">
    <citation type="journal article" date="1995" name="Science">
        <title>Whole-genome random sequencing and assembly of Haemophilus influenzae Rd.</title>
        <authorList>
            <person name="Fleischmann R.D."/>
            <person name="Adams M.D."/>
            <person name="White O."/>
            <person name="Clayton R.A."/>
            <person name="Kirkness E.F."/>
            <person name="Kerlavage A.R."/>
            <person name="Bult C.J."/>
            <person name="Tomb J.-F."/>
            <person name="Dougherty B.A."/>
            <person name="Merrick J.M."/>
            <person name="McKenney K."/>
            <person name="Sutton G.G."/>
            <person name="FitzHugh W."/>
            <person name="Fields C.A."/>
            <person name="Gocayne J.D."/>
            <person name="Scott J.D."/>
            <person name="Shirley R."/>
            <person name="Liu L.-I."/>
            <person name="Glodek A."/>
            <person name="Kelley J.M."/>
            <person name="Weidman J.F."/>
            <person name="Phillips C.A."/>
            <person name="Spriggs T."/>
            <person name="Hedblom E."/>
            <person name="Cotton M.D."/>
            <person name="Utterback T.R."/>
            <person name="Hanna M.C."/>
            <person name="Nguyen D.T."/>
            <person name="Saudek D.M."/>
            <person name="Brandon R.C."/>
            <person name="Fine L.D."/>
            <person name="Fritchman J.L."/>
            <person name="Fuhrmann J.L."/>
            <person name="Geoghagen N.S.M."/>
            <person name="Gnehm C.L."/>
            <person name="McDonald L.A."/>
            <person name="Small K.V."/>
            <person name="Fraser C.M."/>
            <person name="Smith H.O."/>
            <person name="Venter J.C."/>
        </authorList>
    </citation>
    <scope>NUCLEOTIDE SEQUENCE [LARGE SCALE GENOMIC DNA]</scope>
    <source>
        <strain>ATCC 51907 / DSM 11121 / KW20 / Rd</strain>
    </source>
</reference>
<protein>
    <recommendedName>
        <fullName evidence="1">N-acetylglucosamine-6-phosphate deacetylase</fullName>
        <shortName evidence="1">GlcNAc 6-P deacetylase</shortName>
        <ecNumber evidence="1">3.5.1.25</ecNumber>
    </recommendedName>
</protein>
<feature type="chain" id="PRO_0000170917" description="N-acetylglucosamine-6-phosphate deacetylase">
    <location>
        <begin position="1"/>
        <end position="381"/>
    </location>
</feature>
<feature type="active site" description="Proton donor/acceptor" evidence="1">
    <location>
        <position position="271"/>
    </location>
</feature>
<feature type="binding site" evidence="1">
    <location>
        <position position="129"/>
    </location>
    <ligand>
        <name>a divalent metal cation</name>
        <dbReference type="ChEBI" id="CHEBI:60240"/>
    </ligand>
</feature>
<feature type="binding site" evidence="1">
    <location>
        <begin position="140"/>
        <end position="141"/>
    </location>
    <ligand>
        <name>substrate</name>
    </ligand>
</feature>
<feature type="binding site" evidence="1">
    <location>
        <position position="193"/>
    </location>
    <ligand>
        <name>a divalent metal cation</name>
        <dbReference type="ChEBI" id="CHEBI:60240"/>
    </ligand>
</feature>
<feature type="binding site" evidence="1">
    <location>
        <position position="214"/>
    </location>
    <ligand>
        <name>a divalent metal cation</name>
        <dbReference type="ChEBI" id="CHEBI:60240"/>
    </ligand>
</feature>
<feature type="binding site" evidence="1">
    <location>
        <begin position="217"/>
        <end position="218"/>
    </location>
    <ligand>
        <name>substrate</name>
    </ligand>
</feature>
<feature type="binding site" evidence="1">
    <location>
        <position position="226"/>
    </location>
    <ligand>
        <name>substrate</name>
    </ligand>
</feature>
<feature type="binding site" evidence="1">
    <location>
        <begin position="246"/>
        <end position="249"/>
    </location>
    <ligand>
        <name>substrate</name>
    </ligand>
</feature>
<feature type="binding site" evidence="1">
    <location>
        <begin position="306"/>
        <end position="308"/>
    </location>
    <ligand>
        <name>substrate</name>
    </ligand>
</feature>
<dbReference type="EC" id="3.5.1.25" evidence="1"/>
<dbReference type="EMBL" id="L42023">
    <property type="protein sequence ID" value="AAC21812.1"/>
    <property type="molecule type" value="Genomic_DNA"/>
</dbReference>
<dbReference type="PIR" id="E64050">
    <property type="entry name" value="E64050"/>
</dbReference>
<dbReference type="RefSeq" id="NP_438309.1">
    <property type="nucleotide sequence ID" value="NC_000907.1"/>
</dbReference>
<dbReference type="SMR" id="P44537"/>
<dbReference type="STRING" id="71421.HI_0140"/>
<dbReference type="EnsemblBacteria" id="AAC21812">
    <property type="protein sequence ID" value="AAC21812"/>
    <property type="gene ID" value="HI_0140"/>
</dbReference>
<dbReference type="KEGG" id="hin:HI_0140"/>
<dbReference type="PATRIC" id="fig|71421.8.peg.142"/>
<dbReference type="eggNOG" id="COG1820">
    <property type="taxonomic scope" value="Bacteria"/>
</dbReference>
<dbReference type="HOGENOM" id="CLU_032482_2_2_6"/>
<dbReference type="OrthoDB" id="9776488at2"/>
<dbReference type="PhylomeDB" id="P44537"/>
<dbReference type="BioCyc" id="HINF71421:G1GJ1-152-MONOMER"/>
<dbReference type="UniPathway" id="UPA00629">
    <property type="reaction ID" value="UER00683"/>
</dbReference>
<dbReference type="Proteomes" id="UP000000579">
    <property type="component" value="Chromosome"/>
</dbReference>
<dbReference type="GO" id="GO:0046872">
    <property type="term" value="F:metal ion binding"/>
    <property type="evidence" value="ECO:0007669"/>
    <property type="project" value="UniProtKB-KW"/>
</dbReference>
<dbReference type="GO" id="GO:0008448">
    <property type="term" value="F:N-acetylglucosamine-6-phosphate deacetylase activity"/>
    <property type="evidence" value="ECO:0000250"/>
    <property type="project" value="UniProtKB"/>
</dbReference>
<dbReference type="GO" id="GO:0006046">
    <property type="term" value="P:N-acetylglucosamine catabolic process"/>
    <property type="evidence" value="ECO:0000250"/>
    <property type="project" value="UniProtKB"/>
</dbReference>
<dbReference type="GO" id="GO:0019262">
    <property type="term" value="P:N-acetylneuraminate catabolic process"/>
    <property type="evidence" value="ECO:0007669"/>
    <property type="project" value="UniProtKB-UniPathway"/>
</dbReference>
<dbReference type="GO" id="GO:0051289">
    <property type="term" value="P:protein homotetramerization"/>
    <property type="evidence" value="ECO:0000250"/>
    <property type="project" value="UniProtKB"/>
</dbReference>
<dbReference type="CDD" id="cd00854">
    <property type="entry name" value="NagA"/>
    <property type="match status" value="1"/>
</dbReference>
<dbReference type="FunFam" id="3.20.20.140:FF:000004">
    <property type="entry name" value="N-acetylglucosamine-6-phosphate deacetylase"/>
    <property type="match status" value="1"/>
</dbReference>
<dbReference type="Gene3D" id="3.20.20.140">
    <property type="entry name" value="Metal-dependent hydrolases"/>
    <property type="match status" value="1"/>
</dbReference>
<dbReference type="Gene3D" id="2.30.40.10">
    <property type="entry name" value="Urease, subunit C, domain 1"/>
    <property type="match status" value="1"/>
</dbReference>
<dbReference type="InterPro" id="IPR006680">
    <property type="entry name" value="Amidohydro-rel"/>
</dbReference>
<dbReference type="InterPro" id="IPR003764">
    <property type="entry name" value="GlcNAc_6-P_deAcase"/>
</dbReference>
<dbReference type="InterPro" id="IPR011059">
    <property type="entry name" value="Metal-dep_hydrolase_composite"/>
</dbReference>
<dbReference type="InterPro" id="IPR032466">
    <property type="entry name" value="Metal_Hydrolase"/>
</dbReference>
<dbReference type="NCBIfam" id="TIGR00221">
    <property type="entry name" value="nagA"/>
    <property type="match status" value="1"/>
</dbReference>
<dbReference type="NCBIfam" id="NF008371">
    <property type="entry name" value="PRK11170.1"/>
    <property type="match status" value="1"/>
</dbReference>
<dbReference type="PANTHER" id="PTHR11113">
    <property type="entry name" value="N-ACETYLGLUCOSAMINE-6-PHOSPHATE DEACETYLASE"/>
    <property type="match status" value="1"/>
</dbReference>
<dbReference type="PANTHER" id="PTHR11113:SF14">
    <property type="entry name" value="N-ACETYLGLUCOSAMINE-6-PHOSPHATE DEACETYLASE"/>
    <property type="match status" value="1"/>
</dbReference>
<dbReference type="Pfam" id="PF01979">
    <property type="entry name" value="Amidohydro_1"/>
    <property type="match status" value="1"/>
</dbReference>
<dbReference type="PIRSF" id="PIRSF038994">
    <property type="entry name" value="NagA"/>
    <property type="match status" value="1"/>
</dbReference>
<dbReference type="SUPFAM" id="SSF51338">
    <property type="entry name" value="Composite domain of metallo-dependent hydrolases"/>
    <property type="match status" value="1"/>
</dbReference>
<dbReference type="SUPFAM" id="SSF51556">
    <property type="entry name" value="Metallo-dependent hydrolases"/>
    <property type="match status" value="1"/>
</dbReference>
<accession>P44537</accession>
<sequence length="381" mass="41593">MKYALINCVIYTKYDVLRDFAVIINGEIIEAVIPQAELETGIKTIDLQGNNLTAGFIDLQLNGCGGVMFNDQTSVETLEIMQETNLKSGCTSFLPTFITAPDENIKSAVKIMREYLNKHKNQALGLHIEGPYLSIEKKGVHRPEYIREITPEMKDFLCENGDVITKMTIAAENPTINYTPDFVKAGIIVSVGHSNATYEVAKAAFHKGATFATHLHNAMSPISSGREMGVVGAVLDSDVYTGIIVDGVHINYGNVRIDKKIKGDKLCIVTDSIAAAGAPPELESFTFVGKTIYIKEGRCYDANDTIAGASITMMESIKNAVEYVEIPLAEAIRMSNLYPARAIGIDDRLGSVEKGKIANLAVFTPNYQVIGTVVNGKWKEN</sequence>
<organism>
    <name type="scientific">Haemophilus influenzae (strain ATCC 51907 / DSM 11121 / KW20 / Rd)</name>
    <dbReference type="NCBI Taxonomy" id="71421"/>
    <lineage>
        <taxon>Bacteria</taxon>
        <taxon>Pseudomonadati</taxon>
        <taxon>Pseudomonadota</taxon>
        <taxon>Gammaproteobacteria</taxon>
        <taxon>Pasteurellales</taxon>
        <taxon>Pasteurellaceae</taxon>
        <taxon>Haemophilus</taxon>
    </lineage>
</organism>